<accession>A8Z341</accession>
<feature type="chain" id="PRO_1000086692" description="Large ribosomal subunit protein uL18">
    <location>
        <begin position="1"/>
        <end position="119"/>
    </location>
</feature>
<organism>
    <name type="scientific">Staphylococcus aureus (strain USA300 / TCH1516)</name>
    <dbReference type="NCBI Taxonomy" id="451516"/>
    <lineage>
        <taxon>Bacteria</taxon>
        <taxon>Bacillati</taxon>
        <taxon>Bacillota</taxon>
        <taxon>Bacilli</taxon>
        <taxon>Bacillales</taxon>
        <taxon>Staphylococcaceae</taxon>
        <taxon>Staphylococcus</taxon>
    </lineage>
</organism>
<proteinExistence type="inferred from homology"/>
<sequence length="119" mass="13097">MISKIDKNKVRLKRHARVRTNLSGTAEKPRLNVYRSNKHIYAQIIDDNKGVTLAQASSKDSDIATTATKVELATKVGEAIAKKAADKGIKEIVFDRGGYLYHGRVKALAEAARESGLEF</sequence>
<gene>
    <name evidence="1" type="primary">rplR</name>
    <name type="ordered locus">USA300HOU_2225</name>
</gene>
<keyword id="KW-0687">Ribonucleoprotein</keyword>
<keyword id="KW-0689">Ribosomal protein</keyword>
<keyword id="KW-0694">RNA-binding</keyword>
<keyword id="KW-0699">rRNA-binding</keyword>
<dbReference type="EMBL" id="CP000730">
    <property type="protein sequence ID" value="ABX30218.1"/>
    <property type="molecule type" value="Genomic_DNA"/>
</dbReference>
<dbReference type="RefSeq" id="WP_000623881.1">
    <property type="nucleotide sequence ID" value="NC_010079.1"/>
</dbReference>
<dbReference type="SMR" id="A8Z341"/>
<dbReference type="KEGG" id="sax:USA300HOU_2225"/>
<dbReference type="HOGENOM" id="CLU_098841_0_1_9"/>
<dbReference type="GO" id="GO:0022625">
    <property type="term" value="C:cytosolic large ribosomal subunit"/>
    <property type="evidence" value="ECO:0007669"/>
    <property type="project" value="TreeGrafter"/>
</dbReference>
<dbReference type="GO" id="GO:0008097">
    <property type="term" value="F:5S rRNA binding"/>
    <property type="evidence" value="ECO:0007669"/>
    <property type="project" value="TreeGrafter"/>
</dbReference>
<dbReference type="GO" id="GO:0003735">
    <property type="term" value="F:structural constituent of ribosome"/>
    <property type="evidence" value="ECO:0007669"/>
    <property type="project" value="InterPro"/>
</dbReference>
<dbReference type="GO" id="GO:0006412">
    <property type="term" value="P:translation"/>
    <property type="evidence" value="ECO:0007669"/>
    <property type="project" value="UniProtKB-UniRule"/>
</dbReference>
<dbReference type="CDD" id="cd00432">
    <property type="entry name" value="Ribosomal_L18_L5e"/>
    <property type="match status" value="1"/>
</dbReference>
<dbReference type="FunFam" id="3.30.420.100:FF:000001">
    <property type="entry name" value="50S ribosomal protein L18"/>
    <property type="match status" value="1"/>
</dbReference>
<dbReference type="Gene3D" id="3.30.420.100">
    <property type="match status" value="1"/>
</dbReference>
<dbReference type="HAMAP" id="MF_01337_B">
    <property type="entry name" value="Ribosomal_uL18_B"/>
    <property type="match status" value="1"/>
</dbReference>
<dbReference type="InterPro" id="IPR004389">
    <property type="entry name" value="Ribosomal_uL18_bac-type"/>
</dbReference>
<dbReference type="InterPro" id="IPR005484">
    <property type="entry name" value="Ribosomal_uL18_bac/euk"/>
</dbReference>
<dbReference type="NCBIfam" id="TIGR00060">
    <property type="entry name" value="L18_bact"/>
    <property type="match status" value="1"/>
</dbReference>
<dbReference type="PANTHER" id="PTHR12899">
    <property type="entry name" value="39S RIBOSOMAL PROTEIN L18, MITOCHONDRIAL"/>
    <property type="match status" value="1"/>
</dbReference>
<dbReference type="PANTHER" id="PTHR12899:SF3">
    <property type="entry name" value="LARGE RIBOSOMAL SUBUNIT PROTEIN UL18M"/>
    <property type="match status" value="1"/>
</dbReference>
<dbReference type="Pfam" id="PF00861">
    <property type="entry name" value="Ribosomal_L18p"/>
    <property type="match status" value="1"/>
</dbReference>
<dbReference type="SUPFAM" id="SSF53137">
    <property type="entry name" value="Translational machinery components"/>
    <property type="match status" value="1"/>
</dbReference>
<evidence type="ECO:0000255" key="1">
    <source>
        <dbReference type="HAMAP-Rule" id="MF_01337"/>
    </source>
</evidence>
<evidence type="ECO:0000305" key="2"/>
<protein>
    <recommendedName>
        <fullName evidence="1">Large ribosomal subunit protein uL18</fullName>
    </recommendedName>
    <alternativeName>
        <fullName evidence="2">50S ribosomal protein L18</fullName>
    </alternativeName>
</protein>
<name>RL18_STAAT</name>
<reference key="1">
    <citation type="journal article" date="2007" name="BMC Microbiol.">
        <title>Subtle genetic changes enhance virulence of methicillin resistant and sensitive Staphylococcus aureus.</title>
        <authorList>
            <person name="Highlander S.K."/>
            <person name="Hulten K.G."/>
            <person name="Qin X."/>
            <person name="Jiang H."/>
            <person name="Yerrapragada S."/>
            <person name="Mason E.O. Jr."/>
            <person name="Shang Y."/>
            <person name="Williams T.M."/>
            <person name="Fortunov R.M."/>
            <person name="Liu Y."/>
            <person name="Igboeli O."/>
            <person name="Petrosino J."/>
            <person name="Tirumalai M."/>
            <person name="Uzman A."/>
            <person name="Fox G.E."/>
            <person name="Cardenas A.M."/>
            <person name="Muzny D.M."/>
            <person name="Hemphill L."/>
            <person name="Ding Y."/>
            <person name="Dugan S."/>
            <person name="Blyth P.R."/>
            <person name="Buhay C.J."/>
            <person name="Dinh H.H."/>
            <person name="Hawes A.C."/>
            <person name="Holder M."/>
            <person name="Kovar C.L."/>
            <person name="Lee S.L."/>
            <person name="Liu W."/>
            <person name="Nazareth L.V."/>
            <person name="Wang Q."/>
            <person name="Zhou J."/>
            <person name="Kaplan S.L."/>
            <person name="Weinstock G.M."/>
        </authorList>
    </citation>
    <scope>NUCLEOTIDE SEQUENCE [LARGE SCALE GENOMIC DNA]</scope>
    <source>
        <strain>USA300 / TCH1516</strain>
    </source>
</reference>
<comment type="function">
    <text evidence="1">This is one of the proteins that bind and probably mediate the attachment of the 5S RNA into the large ribosomal subunit, where it forms part of the central protuberance.</text>
</comment>
<comment type="subunit">
    <text evidence="1">Part of the 50S ribosomal subunit; part of the 5S rRNA/L5/L18/L25 subcomplex. Contacts the 5S and 23S rRNAs.</text>
</comment>
<comment type="similarity">
    <text evidence="1">Belongs to the universal ribosomal protein uL18 family.</text>
</comment>